<organism>
    <name type="scientific">Trichodesmium erythraeum (strain IMS101)</name>
    <dbReference type="NCBI Taxonomy" id="203124"/>
    <lineage>
        <taxon>Bacteria</taxon>
        <taxon>Bacillati</taxon>
        <taxon>Cyanobacteriota</taxon>
        <taxon>Cyanophyceae</taxon>
        <taxon>Oscillatoriophycideae</taxon>
        <taxon>Oscillatoriales</taxon>
        <taxon>Microcoleaceae</taxon>
        <taxon>Trichodesmium</taxon>
    </lineage>
</organism>
<evidence type="ECO:0000255" key="1">
    <source>
        <dbReference type="HAMAP-Rule" id="MF_00175"/>
    </source>
</evidence>
<evidence type="ECO:0000255" key="2">
    <source>
        <dbReference type="PROSITE-ProRule" id="PRU01250"/>
    </source>
</evidence>
<evidence type="ECO:0000256" key="3">
    <source>
        <dbReference type="SAM" id="MobiDB-lite"/>
    </source>
</evidence>
<dbReference type="EMBL" id="CP000393">
    <property type="protein sequence ID" value="ABG50028.1"/>
    <property type="molecule type" value="Genomic_DNA"/>
</dbReference>
<dbReference type="RefSeq" id="WP_011610422.1">
    <property type="nucleotide sequence ID" value="NC_008312.1"/>
</dbReference>
<dbReference type="SMR" id="Q118P6"/>
<dbReference type="STRING" id="203124.Tery_0584"/>
<dbReference type="KEGG" id="ter:Tery_0584"/>
<dbReference type="eggNOG" id="COG1219">
    <property type="taxonomic scope" value="Bacteria"/>
</dbReference>
<dbReference type="HOGENOM" id="CLU_014218_8_2_3"/>
<dbReference type="OrthoDB" id="9804062at2"/>
<dbReference type="GO" id="GO:0009376">
    <property type="term" value="C:HslUV protease complex"/>
    <property type="evidence" value="ECO:0007669"/>
    <property type="project" value="TreeGrafter"/>
</dbReference>
<dbReference type="GO" id="GO:0005524">
    <property type="term" value="F:ATP binding"/>
    <property type="evidence" value="ECO:0007669"/>
    <property type="project" value="UniProtKB-UniRule"/>
</dbReference>
<dbReference type="GO" id="GO:0016887">
    <property type="term" value="F:ATP hydrolysis activity"/>
    <property type="evidence" value="ECO:0007669"/>
    <property type="project" value="InterPro"/>
</dbReference>
<dbReference type="GO" id="GO:0140662">
    <property type="term" value="F:ATP-dependent protein folding chaperone"/>
    <property type="evidence" value="ECO:0007669"/>
    <property type="project" value="InterPro"/>
</dbReference>
<dbReference type="GO" id="GO:0046983">
    <property type="term" value="F:protein dimerization activity"/>
    <property type="evidence" value="ECO:0007669"/>
    <property type="project" value="InterPro"/>
</dbReference>
<dbReference type="GO" id="GO:0051082">
    <property type="term" value="F:unfolded protein binding"/>
    <property type="evidence" value="ECO:0007669"/>
    <property type="project" value="UniProtKB-UniRule"/>
</dbReference>
<dbReference type="GO" id="GO:0008270">
    <property type="term" value="F:zinc ion binding"/>
    <property type="evidence" value="ECO:0007669"/>
    <property type="project" value="InterPro"/>
</dbReference>
<dbReference type="GO" id="GO:0051301">
    <property type="term" value="P:cell division"/>
    <property type="evidence" value="ECO:0007669"/>
    <property type="project" value="TreeGrafter"/>
</dbReference>
<dbReference type="GO" id="GO:0051603">
    <property type="term" value="P:proteolysis involved in protein catabolic process"/>
    <property type="evidence" value="ECO:0007669"/>
    <property type="project" value="TreeGrafter"/>
</dbReference>
<dbReference type="CDD" id="cd19497">
    <property type="entry name" value="RecA-like_ClpX"/>
    <property type="match status" value="1"/>
</dbReference>
<dbReference type="FunFam" id="1.10.8.60:FF:000002">
    <property type="entry name" value="ATP-dependent Clp protease ATP-binding subunit ClpX"/>
    <property type="match status" value="1"/>
</dbReference>
<dbReference type="FunFam" id="3.40.50.300:FF:000005">
    <property type="entry name" value="ATP-dependent Clp protease ATP-binding subunit ClpX"/>
    <property type="match status" value="1"/>
</dbReference>
<dbReference type="Gene3D" id="1.10.8.60">
    <property type="match status" value="1"/>
</dbReference>
<dbReference type="Gene3D" id="6.20.220.10">
    <property type="entry name" value="ClpX chaperone, C4-type zinc finger domain"/>
    <property type="match status" value="1"/>
</dbReference>
<dbReference type="Gene3D" id="3.40.50.300">
    <property type="entry name" value="P-loop containing nucleotide triphosphate hydrolases"/>
    <property type="match status" value="1"/>
</dbReference>
<dbReference type="HAMAP" id="MF_00175">
    <property type="entry name" value="ClpX"/>
    <property type="match status" value="1"/>
</dbReference>
<dbReference type="InterPro" id="IPR003593">
    <property type="entry name" value="AAA+_ATPase"/>
</dbReference>
<dbReference type="InterPro" id="IPR050052">
    <property type="entry name" value="ATP-dep_Clp_protease_ClpX"/>
</dbReference>
<dbReference type="InterPro" id="IPR003959">
    <property type="entry name" value="ATPase_AAA_core"/>
</dbReference>
<dbReference type="InterPro" id="IPR019489">
    <property type="entry name" value="Clp_ATPase_C"/>
</dbReference>
<dbReference type="InterPro" id="IPR004487">
    <property type="entry name" value="Clp_protease_ATP-bd_su_ClpX"/>
</dbReference>
<dbReference type="InterPro" id="IPR046425">
    <property type="entry name" value="ClpX_bact"/>
</dbReference>
<dbReference type="InterPro" id="IPR027417">
    <property type="entry name" value="P-loop_NTPase"/>
</dbReference>
<dbReference type="InterPro" id="IPR010603">
    <property type="entry name" value="Znf_CppX_C4"/>
</dbReference>
<dbReference type="InterPro" id="IPR038366">
    <property type="entry name" value="Znf_CppX_C4_sf"/>
</dbReference>
<dbReference type="NCBIfam" id="TIGR00382">
    <property type="entry name" value="clpX"/>
    <property type="match status" value="1"/>
</dbReference>
<dbReference type="NCBIfam" id="NF003745">
    <property type="entry name" value="PRK05342.1"/>
    <property type="match status" value="1"/>
</dbReference>
<dbReference type="PANTHER" id="PTHR48102:SF7">
    <property type="entry name" value="ATP-DEPENDENT CLP PROTEASE ATP-BINDING SUBUNIT CLPX-LIKE, MITOCHONDRIAL"/>
    <property type="match status" value="1"/>
</dbReference>
<dbReference type="PANTHER" id="PTHR48102">
    <property type="entry name" value="ATP-DEPENDENT CLP PROTEASE ATP-BINDING SUBUNIT CLPX-LIKE, MITOCHONDRIAL-RELATED"/>
    <property type="match status" value="1"/>
</dbReference>
<dbReference type="Pfam" id="PF07724">
    <property type="entry name" value="AAA_2"/>
    <property type="match status" value="1"/>
</dbReference>
<dbReference type="Pfam" id="PF10431">
    <property type="entry name" value="ClpB_D2-small"/>
    <property type="match status" value="1"/>
</dbReference>
<dbReference type="Pfam" id="PF06689">
    <property type="entry name" value="zf-C4_ClpX"/>
    <property type="match status" value="1"/>
</dbReference>
<dbReference type="SMART" id="SM00382">
    <property type="entry name" value="AAA"/>
    <property type="match status" value="1"/>
</dbReference>
<dbReference type="SMART" id="SM01086">
    <property type="entry name" value="ClpB_D2-small"/>
    <property type="match status" value="1"/>
</dbReference>
<dbReference type="SMART" id="SM00994">
    <property type="entry name" value="zf-C4_ClpX"/>
    <property type="match status" value="1"/>
</dbReference>
<dbReference type="SUPFAM" id="SSF57716">
    <property type="entry name" value="Glucocorticoid receptor-like (DNA-binding domain)"/>
    <property type="match status" value="1"/>
</dbReference>
<dbReference type="SUPFAM" id="SSF52540">
    <property type="entry name" value="P-loop containing nucleoside triphosphate hydrolases"/>
    <property type="match status" value="1"/>
</dbReference>
<dbReference type="PROSITE" id="PS51902">
    <property type="entry name" value="CLPX_ZB"/>
    <property type="match status" value="1"/>
</dbReference>
<protein>
    <recommendedName>
        <fullName evidence="1">ATP-dependent Clp protease ATP-binding subunit ClpX</fullName>
    </recommendedName>
</protein>
<reference key="1">
    <citation type="journal article" date="2015" name="Proc. Natl. Acad. Sci. U.S.A.">
        <title>Trichodesmium genome maintains abundant, widespread noncoding DNA in situ, despite oligotrophic lifestyle.</title>
        <authorList>
            <person name="Walworth N."/>
            <person name="Pfreundt U."/>
            <person name="Nelson W.C."/>
            <person name="Mincer T."/>
            <person name="Heidelberg J.F."/>
            <person name="Fu F."/>
            <person name="Waterbury J.B."/>
            <person name="Glavina del Rio T."/>
            <person name="Goodwin L."/>
            <person name="Kyrpides N.C."/>
            <person name="Land M.L."/>
            <person name="Woyke T."/>
            <person name="Hutchins D.A."/>
            <person name="Hess W.R."/>
            <person name="Webb E.A."/>
        </authorList>
    </citation>
    <scope>NUCLEOTIDE SEQUENCE [LARGE SCALE GENOMIC DNA]</scope>
    <source>
        <strain>IMS101</strain>
    </source>
</reference>
<accession>Q118P6</accession>
<gene>
    <name evidence="1" type="primary">clpX</name>
    <name type="ordered locus">Tery_0584</name>
</gene>
<keyword id="KW-0067">ATP-binding</keyword>
<keyword id="KW-0143">Chaperone</keyword>
<keyword id="KW-0479">Metal-binding</keyword>
<keyword id="KW-0547">Nucleotide-binding</keyword>
<keyword id="KW-0862">Zinc</keyword>
<sequence>MSKYDSHLKCSFCGKSQEQVRKLIAGPGVYICDECVELCNEILDEELFDSNATGAQPPIPRPAPAPQKRGTGTKRLSISQIPKPREIKNYLDAHVIGQEEGKKVLSVAVYNHYKRLSFLEAKKSGKSSQDEVELQKSNILLIGPTGCGKTLLAQTLADLLDVPFAVADATTLTEAGYVGEDVENILLRLLQVADLEVDEAQRGIIYIDEIDKIARKSENPSITRDVSGEGVQQALLKMLEGTVANVPPQGGRKHPYQDCIQIDTSNILFICGGAFVGLEKIVDQRIGKKSMGFIHQSGDSYQVKEKKVVDLMKQMEPNDLVKFGLIPELIGRIPMVAVVEPLDEETLMAILTKPQNALVKQYQKLLRMDNVKLEFEEDAVRAIAKEAFRRKTGARALRGIVEELMLDVMYELPSRKDVSRCTITKEMVEKRSTAELLLHPSSLPKPESA</sequence>
<comment type="function">
    <text evidence="1">ATP-dependent specificity component of the Clp protease. It directs the protease to specific substrates. Can perform chaperone functions in the absence of ClpP.</text>
</comment>
<comment type="subunit">
    <text evidence="1">Component of the ClpX-ClpP complex. Forms a hexameric ring that, in the presence of ATP, binds to fourteen ClpP subunits assembled into a disk-like structure with a central cavity, resembling the structure of eukaryotic proteasomes.</text>
</comment>
<comment type="similarity">
    <text evidence="1">Belongs to the ClpX chaperone family.</text>
</comment>
<proteinExistence type="inferred from homology"/>
<feature type="chain" id="PRO_1000024696" description="ATP-dependent Clp protease ATP-binding subunit ClpX">
    <location>
        <begin position="1"/>
        <end position="449"/>
    </location>
</feature>
<feature type="domain" description="ClpX-type ZB" evidence="2">
    <location>
        <begin position="1"/>
        <end position="51"/>
    </location>
</feature>
<feature type="region of interest" description="Disordered" evidence="3">
    <location>
        <begin position="51"/>
        <end position="76"/>
    </location>
</feature>
<feature type="binding site" evidence="2">
    <location>
        <position position="10"/>
    </location>
    <ligand>
        <name>Zn(2+)</name>
        <dbReference type="ChEBI" id="CHEBI:29105"/>
    </ligand>
</feature>
<feature type="binding site" evidence="2">
    <location>
        <position position="13"/>
    </location>
    <ligand>
        <name>Zn(2+)</name>
        <dbReference type="ChEBI" id="CHEBI:29105"/>
    </ligand>
</feature>
<feature type="binding site" evidence="2">
    <location>
        <position position="32"/>
    </location>
    <ligand>
        <name>Zn(2+)</name>
        <dbReference type="ChEBI" id="CHEBI:29105"/>
    </ligand>
</feature>
<feature type="binding site" evidence="2">
    <location>
        <position position="35"/>
    </location>
    <ligand>
        <name>Zn(2+)</name>
        <dbReference type="ChEBI" id="CHEBI:29105"/>
    </ligand>
</feature>
<feature type="binding site" evidence="1">
    <location>
        <begin position="144"/>
        <end position="151"/>
    </location>
    <ligand>
        <name>ATP</name>
        <dbReference type="ChEBI" id="CHEBI:30616"/>
    </ligand>
</feature>
<name>CLPX_TRIEI</name>